<protein>
    <recommendedName>
        <fullName evidence="1">Probable DNA-directed RNA polymerase subunit delta</fullName>
    </recommendedName>
    <alternativeName>
        <fullName evidence="1">RNAP delta factor</fullName>
    </alternativeName>
</protein>
<reference key="1">
    <citation type="journal article" date="2006" name="J. Bacteriol.">
        <title>Whole-genome sequence of Listeria welshimeri reveals common steps in genome reduction with Listeria innocua as compared to Listeria monocytogenes.</title>
        <authorList>
            <person name="Hain T."/>
            <person name="Steinweg C."/>
            <person name="Kuenne C.T."/>
            <person name="Billion A."/>
            <person name="Ghai R."/>
            <person name="Chatterjee S.S."/>
            <person name="Domann E."/>
            <person name="Kaerst U."/>
            <person name="Goesmann A."/>
            <person name="Bekel T."/>
            <person name="Bartels D."/>
            <person name="Kaiser O."/>
            <person name="Meyer F."/>
            <person name="Puehler A."/>
            <person name="Weisshaar B."/>
            <person name="Wehland J."/>
            <person name="Liang C."/>
            <person name="Dandekar T."/>
            <person name="Lampidis R."/>
            <person name="Kreft J."/>
            <person name="Goebel W."/>
            <person name="Chakraborty T."/>
        </authorList>
    </citation>
    <scope>NUCLEOTIDE SEQUENCE [LARGE SCALE GENOMIC DNA]</scope>
    <source>
        <strain>ATCC 35897 / DSM 20650 / CCUG 15529 / CIP 8149 / NCTC 11857 / SLCC 5334 / V8</strain>
    </source>
</reference>
<keyword id="KW-0240">DNA-directed RNA polymerase</keyword>
<keyword id="KW-0548">Nucleotidyltransferase</keyword>
<keyword id="KW-0804">Transcription</keyword>
<keyword id="KW-0808">Transferase</keyword>
<proteinExistence type="inferred from homology"/>
<feature type="chain" id="PRO_0000303133" description="Probable DNA-directed RNA polymerase subunit delta">
    <location>
        <begin position="1"/>
        <end position="176"/>
    </location>
</feature>
<feature type="domain" description="HTH HARE-type" evidence="2">
    <location>
        <begin position="14"/>
        <end position="81"/>
    </location>
</feature>
<feature type="region of interest" description="Disordered" evidence="3">
    <location>
        <begin position="91"/>
        <end position="119"/>
    </location>
</feature>
<feature type="region of interest" description="Disordered" evidence="3">
    <location>
        <begin position="140"/>
        <end position="176"/>
    </location>
</feature>
<feature type="compositionally biased region" description="Acidic residues" evidence="3">
    <location>
        <begin position="105"/>
        <end position="119"/>
    </location>
</feature>
<feature type="compositionally biased region" description="Acidic residues" evidence="3">
    <location>
        <begin position="159"/>
        <end position="176"/>
    </location>
</feature>
<comment type="function">
    <text evidence="1">Participates in both the initiation and recycling phases of transcription. In the presence of the delta subunit, RNAP displays an increased specificity of transcription, a decreased affinity for nucleic acids, and an increased efficiency of RNA synthesis because of enhanced recycling.</text>
</comment>
<comment type="subunit">
    <text evidence="1">RNAP is composed of a core of 2 alpha, a beta and a beta' subunits. The core is associated with a delta subunit and one of several sigma factors.</text>
</comment>
<comment type="similarity">
    <text evidence="1">Belongs to the RpoE family.</text>
</comment>
<dbReference type="EMBL" id="AM263198">
    <property type="protein sequence ID" value="CAK21928.1"/>
    <property type="molecule type" value="Genomic_DNA"/>
</dbReference>
<dbReference type="RefSeq" id="WP_011703237.1">
    <property type="nucleotide sequence ID" value="NC_008555.1"/>
</dbReference>
<dbReference type="SMR" id="A0ALP6"/>
<dbReference type="STRING" id="386043.lwe2510"/>
<dbReference type="GeneID" id="61190429"/>
<dbReference type="KEGG" id="lwe:lwe2510"/>
<dbReference type="eggNOG" id="COG3343">
    <property type="taxonomic scope" value="Bacteria"/>
</dbReference>
<dbReference type="HOGENOM" id="CLU_116648_0_0_9"/>
<dbReference type="OrthoDB" id="401223at2"/>
<dbReference type="Proteomes" id="UP000000779">
    <property type="component" value="Chromosome"/>
</dbReference>
<dbReference type="GO" id="GO:0000428">
    <property type="term" value="C:DNA-directed RNA polymerase complex"/>
    <property type="evidence" value="ECO:0007669"/>
    <property type="project" value="UniProtKB-KW"/>
</dbReference>
<dbReference type="GO" id="GO:0003899">
    <property type="term" value="F:DNA-directed RNA polymerase activity"/>
    <property type="evidence" value="ECO:0007669"/>
    <property type="project" value="UniProtKB-UniRule"/>
</dbReference>
<dbReference type="GO" id="GO:0006351">
    <property type="term" value="P:DNA-templated transcription"/>
    <property type="evidence" value="ECO:0007669"/>
    <property type="project" value="InterPro"/>
</dbReference>
<dbReference type="GO" id="GO:0006355">
    <property type="term" value="P:regulation of DNA-templated transcription"/>
    <property type="evidence" value="ECO:0007669"/>
    <property type="project" value="UniProtKB-UniRule"/>
</dbReference>
<dbReference type="Gene3D" id="1.10.10.1250">
    <property type="entry name" value="RNA polymerase, subunit delta, N-terminal domain"/>
    <property type="match status" value="1"/>
</dbReference>
<dbReference type="HAMAP" id="MF_00357">
    <property type="entry name" value="RNApol_bact_RpoE"/>
    <property type="match status" value="1"/>
</dbReference>
<dbReference type="InterPro" id="IPR007759">
    <property type="entry name" value="Asxl_HARE-HTH"/>
</dbReference>
<dbReference type="InterPro" id="IPR038087">
    <property type="entry name" value="RNAP_delta_N_dom_sf"/>
</dbReference>
<dbReference type="InterPro" id="IPR029757">
    <property type="entry name" value="RpoE"/>
</dbReference>
<dbReference type="NCBIfam" id="TIGR04567">
    <property type="entry name" value="RNAP_delt_lowGC"/>
    <property type="match status" value="1"/>
</dbReference>
<dbReference type="Pfam" id="PF05066">
    <property type="entry name" value="HARE-HTH"/>
    <property type="match status" value="1"/>
</dbReference>
<dbReference type="PROSITE" id="PS51913">
    <property type="entry name" value="HTH_HARE"/>
    <property type="match status" value="1"/>
</dbReference>
<organism>
    <name type="scientific">Listeria welshimeri serovar 6b (strain ATCC 35897 / DSM 20650 / CCUG 15529 / CIP 8149 / NCTC 11857 / SLCC 5334 / V8)</name>
    <dbReference type="NCBI Taxonomy" id="386043"/>
    <lineage>
        <taxon>Bacteria</taxon>
        <taxon>Bacillati</taxon>
        <taxon>Bacillota</taxon>
        <taxon>Bacilli</taxon>
        <taxon>Bacillales</taxon>
        <taxon>Listeriaceae</taxon>
        <taxon>Listeria</taxon>
    </lineage>
</organism>
<evidence type="ECO:0000255" key="1">
    <source>
        <dbReference type="HAMAP-Rule" id="MF_00357"/>
    </source>
</evidence>
<evidence type="ECO:0000255" key="2">
    <source>
        <dbReference type="PROSITE-ProRule" id="PRU01261"/>
    </source>
</evidence>
<evidence type="ECO:0000256" key="3">
    <source>
        <dbReference type="SAM" id="MobiDB-lite"/>
    </source>
</evidence>
<name>RPOE_LISW6</name>
<accession>A0ALP6</accession>
<gene>
    <name evidence="1" type="primary">rpoE</name>
    <name type="ordered locus">lwe2510</name>
</gene>
<sequence length="176" mass="20440">MDLKNLTQEERSELSLIDVAHFILEQRKETILFPELVKEIQAFLGLKDAEIRERLVQFYTDMNIDGNFISLGNNMWGLRAWYPMDAIDEEVQTQTTPKKKRKSDDDDDEEILDDDVDYDDEEIVEELGEEEITLADVLLDEDEDEDDHLPDGIEGDLATVEDDYTDGDYTEDPEDK</sequence>